<protein>
    <recommendedName>
        <fullName evidence="1">Glycine--tRNA ligase alpha subunit</fullName>
        <ecNumber evidence="1">6.1.1.14</ecNumber>
    </recommendedName>
    <alternativeName>
        <fullName evidence="1">Glycyl-tRNA synthetase alpha subunit</fullName>
        <shortName evidence="1">GlyRS</shortName>
    </alternativeName>
</protein>
<comment type="catalytic activity">
    <reaction evidence="1">
        <text>tRNA(Gly) + glycine + ATP = glycyl-tRNA(Gly) + AMP + diphosphate</text>
        <dbReference type="Rhea" id="RHEA:16013"/>
        <dbReference type="Rhea" id="RHEA-COMP:9664"/>
        <dbReference type="Rhea" id="RHEA-COMP:9683"/>
        <dbReference type="ChEBI" id="CHEBI:30616"/>
        <dbReference type="ChEBI" id="CHEBI:33019"/>
        <dbReference type="ChEBI" id="CHEBI:57305"/>
        <dbReference type="ChEBI" id="CHEBI:78442"/>
        <dbReference type="ChEBI" id="CHEBI:78522"/>
        <dbReference type="ChEBI" id="CHEBI:456215"/>
        <dbReference type="EC" id="6.1.1.14"/>
    </reaction>
</comment>
<comment type="subunit">
    <text evidence="1">Tetramer of two alpha and two beta subunits.</text>
</comment>
<comment type="subcellular location">
    <subcellularLocation>
        <location evidence="1">Cytoplasm</location>
    </subcellularLocation>
</comment>
<comment type="similarity">
    <text evidence="1">Belongs to the class-II aminoacyl-tRNA synthetase family.</text>
</comment>
<sequence>MTTKHDVKTFQGFIMTLQEYWAQQGCAIVQPLDMEVGAGTFHPMTFLRSLGPEPMSSAYVQPSRRPTDGRYGENPNRLQHYYQFQVVLKPSPSNMQELYLGSLEALGVDMNVHDVRFVEDNWESPTLGAWGLGWEIWLNGMEVSQFTYFQQVGGLECKPVTGEITYGLERLAMYIQEVDSVYDLVWTDGPLGKVMYGDIFHQNEVEQSTYNFEHADVDVQFKMFDDCEQACQRLLALEKPLPLPAYEQVMKASHAFNLLDARHAISVTERQRYILRVRTMAKGVAEAYYQAREALGFPMCK</sequence>
<feature type="chain" id="PRO_1000078536" description="Glycine--tRNA ligase alpha subunit">
    <location>
        <begin position="1"/>
        <end position="301"/>
    </location>
</feature>
<proteinExistence type="inferred from homology"/>
<accession>B0TLB0</accession>
<dbReference type="EC" id="6.1.1.14" evidence="1"/>
<dbReference type="EMBL" id="CP000931">
    <property type="protein sequence ID" value="ABZ74583.1"/>
    <property type="molecule type" value="Genomic_DNA"/>
</dbReference>
<dbReference type="RefSeq" id="WP_012275141.1">
    <property type="nucleotide sequence ID" value="NC_010334.1"/>
</dbReference>
<dbReference type="SMR" id="B0TLB0"/>
<dbReference type="STRING" id="458817.Shal_0007"/>
<dbReference type="KEGG" id="shl:Shal_0007"/>
<dbReference type="eggNOG" id="COG0752">
    <property type="taxonomic scope" value="Bacteria"/>
</dbReference>
<dbReference type="HOGENOM" id="CLU_057066_1_0_6"/>
<dbReference type="OrthoDB" id="9802183at2"/>
<dbReference type="Proteomes" id="UP000001317">
    <property type="component" value="Chromosome"/>
</dbReference>
<dbReference type="GO" id="GO:0005829">
    <property type="term" value="C:cytosol"/>
    <property type="evidence" value="ECO:0007669"/>
    <property type="project" value="TreeGrafter"/>
</dbReference>
<dbReference type="GO" id="GO:0005524">
    <property type="term" value="F:ATP binding"/>
    <property type="evidence" value="ECO:0007669"/>
    <property type="project" value="UniProtKB-UniRule"/>
</dbReference>
<dbReference type="GO" id="GO:0004820">
    <property type="term" value="F:glycine-tRNA ligase activity"/>
    <property type="evidence" value="ECO:0007669"/>
    <property type="project" value="UniProtKB-UniRule"/>
</dbReference>
<dbReference type="GO" id="GO:0006426">
    <property type="term" value="P:glycyl-tRNA aminoacylation"/>
    <property type="evidence" value="ECO:0007669"/>
    <property type="project" value="UniProtKB-UniRule"/>
</dbReference>
<dbReference type="CDD" id="cd00733">
    <property type="entry name" value="GlyRS_alpha_core"/>
    <property type="match status" value="1"/>
</dbReference>
<dbReference type="FunFam" id="3.30.930.10:FF:000006">
    <property type="entry name" value="Glycine--tRNA ligase alpha subunit"/>
    <property type="match status" value="1"/>
</dbReference>
<dbReference type="Gene3D" id="3.30.930.10">
    <property type="entry name" value="Bira Bifunctional Protein, Domain 2"/>
    <property type="match status" value="1"/>
</dbReference>
<dbReference type="Gene3D" id="1.20.58.180">
    <property type="entry name" value="Class II aaRS and biotin synthetases, domain 2"/>
    <property type="match status" value="1"/>
</dbReference>
<dbReference type="HAMAP" id="MF_00254">
    <property type="entry name" value="Gly_tRNA_synth_alpha"/>
    <property type="match status" value="1"/>
</dbReference>
<dbReference type="InterPro" id="IPR045864">
    <property type="entry name" value="aa-tRNA-synth_II/BPL/LPL"/>
</dbReference>
<dbReference type="InterPro" id="IPR006194">
    <property type="entry name" value="Gly-tRNA-synth_heterodimer"/>
</dbReference>
<dbReference type="InterPro" id="IPR002310">
    <property type="entry name" value="Gly-tRNA_ligase_asu"/>
</dbReference>
<dbReference type="NCBIfam" id="TIGR00388">
    <property type="entry name" value="glyQ"/>
    <property type="match status" value="1"/>
</dbReference>
<dbReference type="NCBIfam" id="NF006827">
    <property type="entry name" value="PRK09348.1"/>
    <property type="match status" value="1"/>
</dbReference>
<dbReference type="PANTHER" id="PTHR30075:SF2">
    <property type="entry name" value="GLYCINE--TRNA LIGASE, CHLOROPLASTIC_MITOCHONDRIAL 2"/>
    <property type="match status" value="1"/>
</dbReference>
<dbReference type="PANTHER" id="PTHR30075">
    <property type="entry name" value="GLYCYL-TRNA SYNTHETASE"/>
    <property type="match status" value="1"/>
</dbReference>
<dbReference type="Pfam" id="PF02091">
    <property type="entry name" value="tRNA-synt_2e"/>
    <property type="match status" value="1"/>
</dbReference>
<dbReference type="PRINTS" id="PR01044">
    <property type="entry name" value="TRNASYNTHGA"/>
</dbReference>
<dbReference type="SUPFAM" id="SSF55681">
    <property type="entry name" value="Class II aaRS and biotin synthetases"/>
    <property type="match status" value="1"/>
</dbReference>
<dbReference type="PROSITE" id="PS50861">
    <property type="entry name" value="AA_TRNA_LIGASE_II_GLYAB"/>
    <property type="match status" value="1"/>
</dbReference>
<reference key="1">
    <citation type="submission" date="2008-01" db="EMBL/GenBank/DDBJ databases">
        <title>Complete sequence of Shewanella halifaxensis HAW-EB4.</title>
        <authorList>
            <consortium name="US DOE Joint Genome Institute"/>
            <person name="Copeland A."/>
            <person name="Lucas S."/>
            <person name="Lapidus A."/>
            <person name="Glavina del Rio T."/>
            <person name="Dalin E."/>
            <person name="Tice H."/>
            <person name="Bruce D."/>
            <person name="Goodwin L."/>
            <person name="Pitluck S."/>
            <person name="Sims D."/>
            <person name="Brettin T."/>
            <person name="Detter J.C."/>
            <person name="Han C."/>
            <person name="Kuske C.R."/>
            <person name="Schmutz J."/>
            <person name="Larimer F."/>
            <person name="Land M."/>
            <person name="Hauser L."/>
            <person name="Kyrpides N."/>
            <person name="Kim E."/>
            <person name="Zhao J.-S."/>
            <person name="Richardson P."/>
        </authorList>
    </citation>
    <scope>NUCLEOTIDE SEQUENCE [LARGE SCALE GENOMIC DNA]</scope>
    <source>
        <strain>HAW-EB4</strain>
    </source>
</reference>
<gene>
    <name evidence="1" type="primary">glyQ</name>
    <name type="ordered locus">Shal_0007</name>
</gene>
<name>SYGA_SHEHH</name>
<evidence type="ECO:0000255" key="1">
    <source>
        <dbReference type="HAMAP-Rule" id="MF_00254"/>
    </source>
</evidence>
<organism>
    <name type="scientific">Shewanella halifaxensis (strain HAW-EB4)</name>
    <dbReference type="NCBI Taxonomy" id="458817"/>
    <lineage>
        <taxon>Bacteria</taxon>
        <taxon>Pseudomonadati</taxon>
        <taxon>Pseudomonadota</taxon>
        <taxon>Gammaproteobacteria</taxon>
        <taxon>Alteromonadales</taxon>
        <taxon>Shewanellaceae</taxon>
        <taxon>Shewanella</taxon>
    </lineage>
</organism>
<keyword id="KW-0030">Aminoacyl-tRNA synthetase</keyword>
<keyword id="KW-0067">ATP-binding</keyword>
<keyword id="KW-0963">Cytoplasm</keyword>
<keyword id="KW-0436">Ligase</keyword>
<keyword id="KW-0547">Nucleotide-binding</keyword>
<keyword id="KW-0648">Protein biosynthesis</keyword>